<comment type="function">
    <text evidence="1 5 6">Involved in the RNA silencing pathway. May bind to short RNAs such as microRNAs (miRNAs) or short interfering RNAs (siRNAs), and represses the translation of mRNAs which are complementary to them (By similarity). Regulates shoot apical meristem (SAM) initiation and maintenance and leaf polarization through the trans-acting siRNAS (ta-siRNAs) pathway which probably modulates the expression of the ARF2, ARF3, ARF4, ARF14 and ARF15 genes.</text>
</comment>
<comment type="tissue specificity">
    <text evidence="6">Expressed in the reproductive shoot apex.</text>
</comment>
<comment type="disruption phenotype">
    <text evidence="6">Lack of the shoot apical meristem (SAM) in the embryo, but formation of radicle and scutellum. In weak alleles, formation of an incomplete SAM and abnormal leaves production.</text>
</comment>
<comment type="similarity">
    <text evidence="7">Belongs to the argonaute family. Ago subfamily.</text>
</comment>
<comment type="sequence caution" evidence="7">
    <conflict type="erroneous gene model prediction">
        <sequence resource="EMBL-CDS" id="AAS01930"/>
    </conflict>
</comment>
<comment type="sequence caution" evidence="7">
    <conflict type="erroneous gene model prediction">
        <sequence resource="EMBL-CDS" id="ABF96954"/>
    </conflict>
</comment>
<comment type="sequence caution" evidence="7">
    <conflict type="erroneous gene model prediction">
        <sequence resource="EMBL-CDS" id="BAF12387"/>
    </conflict>
</comment>
<name>AGO7_ORYSJ</name>
<proteinExistence type="evidence at transcript level"/>
<dbReference type="EMBL" id="EF486281">
    <property type="protein sequence ID" value="ABO93307.1"/>
    <property type="molecule type" value="mRNA"/>
</dbReference>
<dbReference type="EMBL" id="AB353924">
    <property type="protein sequence ID" value="BAF80152.1"/>
    <property type="molecule type" value="mRNA"/>
</dbReference>
<dbReference type="EMBL" id="AC135597">
    <property type="protein sequence ID" value="AAS01930.1"/>
    <property type="status" value="ALT_SEQ"/>
    <property type="molecule type" value="Genomic_DNA"/>
</dbReference>
<dbReference type="EMBL" id="DP000009">
    <property type="protein sequence ID" value="ABF96954.1"/>
    <property type="status" value="ALT_SEQ"/>
    <property type="molecule type" value="Genomic_DNA"/>
</dbReference>
<dbReference type="EMBL" id="AP008209">
    <property type="protein sequence ID" value="BAF12387.2"/>
    <property type="status" value="ALT_SEQ"/>
    <property type="molecule type" value="Genomic_DNA"/>
</dbReference>
<dbReference type="EMBL" id="AP014959">
    <property type="protein sequence ID" value="BAS84901.1"/>
    <property type="molecule type" value="Genomic_DNA"/>
</dbReference>
<dbReference type="RefSeq" id="XP_015629412.1">
    <property type="nucleotide sequence ID" value="XM_015773926.1"/>
</dbReference>
<dbReference type="SMR" id="Q75HC2"/>
<dbReference type="FunCoup" id="Q75HC2">
    <property type="interactions" value="8"/>
</dbReference>
<dbReference type="STRING" id="39947.Q75HC2"/>
<dbReference type="PaxDb" id="39947-Q75HC2"/>
<dbReference type="EnsemblPlants" id="Os03t0449200-01">
    <property type="protein sequence ID" value="Os03t0449200-01"/>
    <property type="gene ID" value="Os03g0449200"/>
</dbReference>
<dbReference type="Gramene" id="Os03t0449200-01">
    <property type="protein sequence ID" value="Os03t0449200-01"/>
    <property type="gene ID" value="Os03g0449200"/>
</dbReference>
<dbReference type="KEGG" id="dosa:Os03g0449200"/>
<dbReference type="eggNOG" id="KOG1041">
    <property type="taxonomic scope" value="Eukaryota"/>
</dbReference>
<dbReference type="HOGENOM" id="CLU_004544_0_0_1"/>
<dbReference type="InParanoid" id="Q75HC2"/>
<dbReference type="OMA" id="FARCTRP"/>
<dbReference type="OrthoDB" id="10252740at2759"/>
<dbReference type="Proteomes" id="UP000000763">
    <property type="component" value="Chromosome 3"/>
</dbReference>
<dbReference type="Proteomes" id="UP000059680">
    <property type="component" value="Chromosome 3"/>
</dbReference>
<dbReference type="GO" id="GO:0005737">
    <property type="term" value="C:cytoplasm"/>
    <property type="evidence" value="ECO:0000318"/>
    <property type="project" value="GO_Central"/>
</dbReference>
<dbReference type="GO" id="GO:0005634">
    <property type="term" value="C:nucleus"/>
    <property type="evidence" value="ECO:0000318"/>
    <property type="project" value="GO_Central"/>
</dbReference>
<dbReference type="GO" id="GO:0003723">
    <property type="term" value="F:RNA binding"/>
    <property type="evidence" value="ECO:0000318"/>
    <property type="project" value="GO_Central"/>
</dbReference>
<dbReference type="GO" id="GO:0004521">
    <property type="term" value="F:RNA endonuclease activity"/>
    <property type="evidence" value="ECO:0000318"/>
    <property type="project" value="GO_Central"/>
</dbReference>
<dbReference type="GO" id="GO:0010492">
    <property type="term" value="P:maintenance of shoot apical meristem identity"/>
    <property type="evidence" value="ECO:0000315"/>
    <property type="project" value="UniProtKB"/>
</dbReference>
<dbReference type="GO" id="GO:0031047">
    <property type="term" value="P:regulatory ncRNA-mediated gene silencing"/>
    <property type="evidence" value="ECO:0000318"/>
    <property type="project" value="GO_Central"/>
</dbReference>
<dbReference type="GO" id="GO:0035194">
    <property type="term" value="P:regulatory ncRNA-mediated post-transcriptional gene silencing"/>
    <property type="evidence" value="ECO:0000315"/>
    <property type="project" value="UniProtKB"/>
</dbReference>
<dbReference type="CDD" id="cd02846">
    <property type="entry name" value="PAZ_argonaute_like"/>
    <property type="match status" value="1"/>
</dbReference>
<dbReference type="CDD" id="cd04657">
    <property type="entry name" value="Piwi_ago-like"/>
    <property type="match status" value="1"/>
</dbReference>
<dbReference type="FunFam" id="3.40.50.2300:FF:000110">
    <property type="entry name" value="Argonaute 10"/>
    <property type="match status" value="1"/>
</dbReference>
<dbReference type="FunFam" id="3.30.420.10:FF:000013">
    <property type="entry name" value="protein argonaute 10-like"/>
    <property type="match status" value="1"/>
</dbReference>
<dbReference type="FunFam" id="2.170.260.10:FF:000008">
    <property type="entry name" value="Protein argonaute 7"/>
    <property type="match status" value="1"/>
</dbReference>
<dbReference type="Gene3D" id="3.40.50.2300">
    <property type="match status" value="1"/>
</dbReference>
<dbReference type="Gene3D" id="2.170.260.10">
    <property type="entry name" value="paz domain"/>
    <property type="match status" value="1"/>
</dbReference>
<dbReference type="Gene3D" id="3.30.420.10">
    <property type="entry name" value="Ribonuclease H-like superfamily/Ribonuclease H"/>
    <property type="match status" value="1"/>
</dbReference>
<dbReference type="InterPro" id="IPR014811">
    <property type="entry name" value="ArgoL1"/>
</dbReference>
<dbReference type="InterPro" id="IPR032474">
    <property type="entry name" value="Argonaute_N"/>
</dbReference>
<dbReference type="InterPro" id="IPR003100">
    <property type="entry name" value="PAZ_dom"/>
</dbReference>
<dbReference type="InterPro" id="IPR036085">
    <property type="entry name" value="PAZ_dom_sf"/>
</dbReference>
<dbReference type="InterPro" id="IPR003165">
    <property type="entry name" value="Piwi"/>
</dbReference>
<dbReference type="InterPro" id="IPR045246">
    <property type="entry name" value="Piwi_ago-like"/>
</dbReference>
<dbReference type="InterPro" id="IPR012337">
    <property type="entry name" value="RNaseH-like_sf"/>
</dbReference>
<dbReference type="InterPro" id="IPR036397">
    <property type="entry name" value="RNaseH_sf"/>
</dbReference>
<dbReference type="PANTHER" id="PTHR22891">
    <property type="entry name" value="EUKARYOTIC TRANSLATION INITIATION FACTOR 2C"/>
    <property type="match status" value="1"/>
</dbReference>
<dbReference type="Pfam" id="PF08699">
    <property type="entry name" value="ArgoL1"/>
    <property type="match status" value="1"/>
</dbReference>
<dbReference type="Pfam" id="PF16486">
    <property type="entry name" value="ArgoN"/>
    <property type="match status" value="1"/>
</dbReference>
<dbReference type="Pfam" id="PF02170">
    <property type="entry name" value="PAZ"/>
    <property type="match status" value="1"/>
</dbReference>
<dbReference type="Pfam" id="PF02171">
    <property type="entry name" value="Piwi"/>
    <property type="match status" value="1"/>
</dbReference>
<dbReference type="SMART" id="SM01163">
    <property type="entry name" value="DUF1785"/>
    <property type="match status" value="1"/>
</dbReference>
<dbReference type="SMART" id="SM00949">
    <property type="entry name" value="PAZ"/>
    <property type="match status" value="1"/>
</dbReference>
<dbReference type="SMART" id="SM00950">
    <property type="entry name" value="Piwi"/>
    <property type="match status" value="1"/>
</dbReference>
<dbReference type="SUPFAM" id="SSF101690">
    <property type="entry name" value="PAZ domain"/>
    <property type="match status" value="1"/>
</dbReference>
<dbReference type="SUPFAM" id="SSF53098">
    <property type="entry name" value="Ribonuclease H-like"/>
    <property type="match status" value="1"/>
</dbReference>
<dbReference type="PROSITE" id="PS50821">
    <property type="entry name" value="PAZ"/>
    <property type="match status" value="1"/>
</dbReference>
<dbReference type="PROSITE" id="PS50822">
    <property type="entry name" value="PIWI"/>
    <property type="match status" value="1"/>
</dbReference>
<evidence type="ECO:0000250" key="1"/>
<evidence type="ECO:0000255" key="2">
    <source>
        <dbReference type="PROSITE-ProRule" id="PRU00142"/>
    </source>
</evidence>
<evidence type="ECO:0000255" key="3">
    <source>
        <dbReference type="PROSITE-ProRule" id="PRU00150"/>
    </source>
</evidence>
<evidence type="ECO:0000256" key="4">
    <source>
        <dbReference type="SAM" id="MobiDB-lite"/>
    </source>
</evidence>
<evidence type="ECO:0000269" key="5">
    <source>
    </source>
</evidence>
<evidence type="ECO:0000269" key="6">
    <source>
    </source>
</evidence>
<evidence type="ECO:0000305" key="7"/>
<sequence length="1048" mass="117498">MEGEREGVVAKNEDNAGGGGGGLGTGGNGGGGGGGSANGRRRWRGGGSSGYRQHPIIQAYPALLPLPINGATGHAHINGAVSLPLPLPPPVLLYLQPPPPPPLLPLLPKVAAATFYGKPPKAADAAPRGSMWKHRPSKKPPPHAITAALLPLPRDGKALQEKIFFANERKTSEKEVNHVDTHEKFTVAPLDNAIARRPDMGGVEGAEIPLSANHFLVQFDPGQKIFHYNVDISPRPSKETARMIKKKLVEENPSVLSGSQPAFDGRKNLYSPVRFQEDRVEFFVSLPVALARCSVVKEDTGHMLDKQKLKTFKVNVRLVSKLCGEDLNKYLNEDKDGIPLPQDYLHALDVVLREGAMESSILVGRSLYARSMGEARDIGGGAVGLRGFFQRLRPTKQGLALNVDLSLSAFHESTGIISYLQKRCDFLKDLPQKKTRALAEEEHREVEKALKNIRVFVCHRETNQRYHVHSLTKETTENLKFRDRSGKDLMVVDYFKEHYNHDIQFRNLPCLQIGRSKPCYVPMELCVVCEGQKFLGKLSDEQTSKILKMGCERPSERKGIIKGVVKGAFHARSDTYADQFSLQVSKHMTKLSGRVLLPPKLKLGSSGRIKDITPDRFDRQWSFLDSHVAEGSKIKSWALISFGGTPEQHFCITKFVNQLSNRCEQLGILLNKKTIISPIFERIQLLNNVGILEGKLKKIQEAASGNLQLLICVMERRHQGYADLKRIAETSIGVVTQCCLYSNLSKLTSQFLTNLALKINAKLGGCNIALYSSFPCQIPRIFLSEEPVMFMGADVTHPHPLDDSSPSVVAVVASMNWPSANKYISRMRSQTHRKEIIEQLDVMAGELLEEFLKEVGKLPSRIIFFRDGVSETQFYKVLKEEMHAVRTTCSRYPGYKPLITFIVVQKRHHTRLFHRERNGSSSHYSDQNIPPGTVVDTVITHPREFDFYLCSHWGTKGTSRPTHYHVLWDENNFRSDEVQQLIHNLCYTFARCTRPVSLVPPAYYAHLAAYRGRLYLERSDTTMYRVSPLQTVPLPKLRDNVKRLMFYC</sequence>
<protein>
    <recommendedName>
        <fullName>Protein argonaute 7</fullName>
        <shortName>OsAGO7</shortName>
    </recommendedName>
    <alternativeName>
        <fullName>Protein SHOOT ORGANIZATION 2</fullName>
    </alternativeName>
    <alternativeName>
        <fullName>Protein SHOOTLESS 4</fullName>
    </alternativeName>
</protein>
<keyword id="KW-1185">Reference proteome</keyword>
<keyword id="KW-0943">RNA-mediated gene silencing</keyword>
<gene>
    <name type="primary">AGO7</name>
    <name type="synonym">SHL4</name>
    <name type="synonym">SHO2</name>
    <name type="ordered locus">Os03g0449200</name>
    <name type="ordered locus">LOC_Os03g33650</name>
    <name type="ORF">OSJNBa0034E08.23</name>
</gene>
<reference key="1">
    <citation type="journal article" date="2007" name="Planta">
        <title>Over-expression of rice OsAGO7 gene induces upward curling of the leaf blade that enhanced erect-leaf habit.</title>
        <authorList>
            <person name="Shi Z."/>
            <person name="Wang J."/>
            <person name="Wan X."/>
            <person name="Shen G."/>
            <person name="Wang X."/>
            <person name="Zhang J."/>
        </authorList>
    </citation>
    <scope>NUCLEOTIDE SEQUENCE [MRNA]</scope>
    <scope>FUNCTION</scope>
    <source>
        <strain>cv. Zhonghua 11</strain>
    </source>
</reference>
<reference key="2">
    <citation type="journal article" date="2007" name="Proc. Natl. Acad. Sci. U.S.A.">
        <title>The small interfering RNA production pathway is required for shoot meristem initiation in rice.</title>
        <authorList>
            <person name="Nagasaki H."/>
            <person name="Itoh J."/>
            <person name="Hayashi K."/>
            <person name="Hibara K."/>
            <person name="Satoh-Nagasawa N."/>
            <person name="Nosaka M."/>
            <person name="Mukouhata M."/>
            <person name="Ashikari M."/>
            <person name="Kitano H."/>
            <person name="Matsuoka M."/>
            <person name="Nagato Y."/>
            <person name="Sato Y."/>
        </authorList>
    </citation>
    <scope>NUCLEOTIDE SEQUENCE [MRNA]</scope>
    <scope>FUNCTION</scope>
    <scope>TISSUE SPECIFICITY</scope>
    <scope>DEVELOPMENTAL STAGE</scope>
    <scope>DISRUPTION PHENOTYPE</scope>
    <source>
        <strain>cv. Nipponbare</strain>
    </source>
</reference>
<reference key="3">
    <citation type="journal article" date="2005" name="Genome Res.">
        <title>Sequence, annotation, and analysis of synteny between rice chromosome 3 and diverged grass species.</title>
        <authorList>
            <consortium name="The rice chromosome 3 sequencing consortium"/>
            <person name="Buell C.R."/>
            <person name="Yuan Q."/>
            <person name="Ouyang S."/>
            <person name="Liu J."/>
            <person name="Zhu W."/>
            <person name="Wang A."/>
            <person name="Maiti R."/>
            <person name="Haas B."/>
            <person name="Wortman J."/>
            <person name="Pertea M."/>
            <person name="Jones K.M."/>
            <person name="Kim M."/>
            <person name="Overton L."/>
            <person name="Tsitrin T."/>
            <person name="Fadrosh D."/>
            <person name="Bera J."/>
            <person name="Weaver B."/>
            <person name="Jin S."/>
            <person name="Johri S."/>
            <person name="Reardon M."/>
            <person name="Webb K."/>
            <person name="Hill J."/>
            <person name="Moffat K."/>
            <person name="Tallon L."/>
            <person name="Van Aken S."/>
            <person name="Lewis M."/>
            <person name="Utterback T."/>
            <person name="Feldblyum T."/>
            <person name="Zismann V."/>
            <person name="Iobst S."/>
            <person name="Hsiao J."/>
            <person name="de Vazeille A.R."/>
            <person name="Salzberg S.L."/>
            <person name="White O."/>
            <person name="Fraser C.M."/>
            <person name="Yu Y."/>
            <person name="Kim H."/>
            <person name="Rambo T."/>
            <person name="Currie J."/>
            <person name="Collura K."/>
            <person name="Kernodle-Thompson S."/>
            <person name="Wei F."/>
            <person name="Kudrna K."/>
            <person name="Ammiraju J.S.S."/>
            <person name="Luo M."/>
            <person name="Goicoechea J.L."/>
            <person name="Wing R.A."/>
            <person name="Henry D."/>
            <person name="Oates R."/>
            <person name="Palmer M."/>
            <person name="Pries G."/>
            <person name="Saski C."/>
            <person name="Simmons J."/>
            <person name="Soderlund C."/>
            <person name="Nelson W."/>
            <person name="de la Bastide M."/>
            <person name="Spiegel L."/>
            <person name="Nascimento L."/>
            <person name="Huang E."/>
            <person name="Preston R."/>
            <person name="Zutavern T."/>
            <person name="Palmer L."/>
            <person name="O'Shaughnessy A."/>
            <person name="Dike S."/>
            <person name="McCombie W.R."/>
            <person name="Minx P."/>
            <person name="Cordum H."/>
            <person name="Wilson R."/>
            <person name="Jin W."/>
            <person name="Lee H.R."/>
            <person name="Jiang J."/>
            <person name="Jackson S."/>
        </authorList>
    </citation>
    <scope>NUCLEOTIDE SEQUENCE [LARGE SCALE GENOMIC DNA]</scope>
    <source>
        <strain>cv. Nipponbare</strain>
    </source>
</reference>
<reference key="4">
    <citation type="journal article" date="2005" name="Nature">
        <title>The map-based sequence of the rice genome.</title>
        <authorList>
            <consortium name="International rice genome sequencing project (IRGSP)"/>
        </authorList>
    </citation>
    <scope>NUCLEOTIDE SEQUENCE [LARGE SCALE GENOMIC DNA]</scope>
    <source>
        <strain>cv. Nipponbare</strain>
    </source>
</reference>
<reference key="5">
    <citation type="journal article" date="2008" name="Nucleic Acids Res.">
        <title>The rice annotation project database (RAP-DB): 2008 update.</title>
        <authorList>
            <consortium name="The rice annotation project (RAP)"/>
        </authorList>
    </citation>
    <scope>GENOME REANNOTATION</scope>
    <source>
        <strain>cv. Nipponbare</strain>
    </source>
</reference>
<reference key="6">
    <citation type="journal article" date="2013" name="Rice">
        <title>Improvement of the Oryza sativa Nipponbare reference genome using next generation sequence and optical map data.</title>
        <authorList>
            <person name="Kawahara Y."/>
            <person name="de la Bastide M."/>
            <person name="Hamilton J.P."/>
            <person name="Kanamori H."/>
            <person name="McCombie W.R."/>
            <person name="Ouyang S."/>
            <person name="Schwartz D.C."/>
            <person name="Tanaka T."/>
            <person name="Wu J."/>
            <person name="Zhou S."/>
            <person name="Childs K.L."/>
            <person name="Davidson R.M."/>
            <person name="Lin H."/>
            <person name="Quesada-Ocampo L."/>
            <person name="Vaillancourt B."/>
            <person name="Sakai H."/>
            <person name="Lee S.S."/>
            <person name="Kim J."/>
            <person name="Numa H."/>
            <person name="Itoh T."/>
            <person name="Buell C.R."/>
            <person name="Matsumoto T."/>
        </authorList>
    </citation>
    <scope>GENOME REANNOTATION</scope>
    <source>
        <strain>cv. Nipponbare</strain>
    </source>
</reference>
<reference key="7">
    <citation type="journal article" date="2008" name="BMC Genomics">
        <title>Genome-wide identification, organization and phylogenetic analysis of dicer-like, argonaute and RNA-dependent RNA polymerase gene families and their expression analysis during reproductive development and stress in rice.</title>
        <authorList>
            <person name="Kapoor M."/>
            <person name="Arora R."/>
            <person name="Lama T."/>
            <person name="Nijhawan A."/>
            <person name="Khurana J.P."/>
            <person name="Tyagi A.K."/>
            <person name="Kapoor S."/>
        </authorList>
    </citation>
    <scope>GENE FAMILY</scope>
    <scope>NOMENCLATURE</scope>
</reference>
<organism>
    <name type="scientific">Oryza sativa subsp. japonica</name>
    <name type="common">Rice</name>
    <dbReference type="NCBI Taxonomy" id="39947"/>
    <lineage>
        <taxon>Eukaryota</taxon>
        <taxon>Viridiplantae</taxon>
        <taxon>Streptophyta</taxon>
        <taxon>Embryophyta</taxon>
        <taxon>Tracheophyta</taxon>
        <taxon>Spermatophyta</taxon>
        <taxon>Magnoliopsida</taxon>
        <taxon>Liliopsida</taxon>
        <taxon>Poales</taxon>
        <taxon>Poaceae</taxon>
        <taxon>BOP clade</taxon>
        <taxon>Oryzoideae</taxon>
        <taxon>Oryzeae</taxon>
        <taxon>Oryzinae</taxon>
        <taxon>Oryza</taxon>
        <taxon>Oryza sativa</taxon>
    </lineage>
</organism>
<feature type="chain" id="PRO_0000378433" description="Protein argonaute 7">
    <location>
        <begin position="1"/>
        <end position="1048"/>
    </location>
</feature>
<feature type="domain" description="PAZ" evidence="2">
    <location>
        <begin position="422"/>
        <end position="530"/>
    </location>
</feature>
<feature type="domain" description="Piwi" evidence="3">
    <location>
        <begin position="709"/>
        <end position="1017"/>
    </location>
</feature>
<feature type="region of interest" description="Disordered" evidence="4">
    <location>
        <begin position="1"/>
        <end position="50"/>
    </location>
</feature>
<feature type="region of interest" description="Disordered" evidence="4">
    <location>
        <begin position="121"/>
        <end position="141"/>
    </location>
</feature>
<feature type="compositionally biased region" description="Basic and acidic residues" evidence="4">
    <location>
        <begin position="1"/>
        <end position="14"/>
    </location>
</feature>
<feature type="compositionally biased region" description="Gly residues" evidence="4">
    <location>
        <begin position="16"/>
        <end position="37"/>
    </location>
</feature>
<feature type="compositionally biased region" description="Basic residues" evidence="4">
    <location>
        <begin position="131"/>
        <end position="141"/>
    </location>
</feature>
<accession>Q75HC2</accession>
<accession>A0A0P0VZZ8</accession>
<accession>A4UTL6</accession>